<protein>
    <recommendedName>
        <fullName>Probable transcriptional regulator ycf27</fullName>
    </recommendedName>
    <alternativeName>
        <fullName>OmpR-like protein</fullName>
    </alternativeName>
</protein>
<proteinExistence type="inferred from homology"/>
<organism>
    <name type="scientific">Guillardia theta</name>
    <name type="common">Cryptophyte</name>
    <name type="synonym">Cryptomonas phi</name>
    <dbReference type="NCBI Taxonomy" id="55529"/>
    <lineage>
        <taxon>Eukaryota</taxon>
        <taxon>Cryptophyceae</taxon>
        <taxon>Pyrenomonadales</taxon>
        <taxon>Geminigeraceae</taxon>
        <taxon>Guillardia</taxon>
    </lineage>
</organism>
<gene>
    <name type="primary">ycf27</name>
</gene>
<sequence length="254" mass="28904">MIKNRCLDIDLETKEKVLIVDDEASIRKILETRLSMIGYFVVTASDGEEALNLFHQEMPDVVILDIMMPKLDGYGVCQEIRKDSDVPIIMLTALGDVADRITGLELGADDYVVKPFSPKELEARIRAVLRRTNKAAFSSHLTTSGIINFNFLTIDLNKRQIYKDNERIRLTGMEFSLLELLISRSGQPFSRADILQEVWGYTPERHVDTRVVDVHISRLRAKLETDPSNPDLILTARGTGYLFQRITDQHVLKT</sequence>
<accession>O78428</accession>
<comment type="function">
    <text>Probable promoter-specific protein mediating the interaction between DNA and RNA polymerase.</text>
</comment>
<comment type="subcellular location">
    <subcellularLocation>
        <location>Plastid</location>
        <location>Chloroplast</location>
    </subcellularLocation>
</comment>
<reference key="1">
    <citation type="journal article" date="1999" name="J. Mol. Evol.">
        <title>The plastid genome of the cryptophyte alga, Guillardia theta: complete sequence and conserved synteny groups confirm its common ancestry with red algae.</title>
        <authorList>
            <person name="Douglas S.E."/>
            <person name="Penny S.L."/>
        </authorList>
    </citation>
    <scope>NUCLEOTIDE SEQUENCE [LARGE SCALE GENOMIC DNA]</scope>
</reference>
<keyword id="KW-0150">Chloroplast</keyword>
<keyword id="KW-0238">DNA-binding</keyword>
<keyword id="KW-0597">Phosphoprotein</keyword>
<keyword id="KW-0934">Plastid</keyword>
<keyword id="KW-0804">Transcription</keyword>
<keyword id="KW-0805">Transcription regulation</keyword>
<keyword id="KW-0902">Two-component regulatory system</keyword>
<feature type="chain" id="PRO_0000081351" description="Probable transcriptional regulator ycf27">
    <location>
        <begin position="1"/>
        <end position="254"/>
    </location>
</feature>
<feature type="domain" description="Response regulatory" evidence="2">
    <location>
        <begin position="16"/>
        <end position="129"/>
    </location>
</feature>
<feature type="DNA-binding region" description="H-T-H motif" evidence="1">
    <location>
        <begin position="85"/>
        <end position="103"/>
    </location>
</feature>
<feature type="DNA-binding region" description="OmpR/PhoB-type" evidence="3">
    <location>
        <begin position="144"/>
        <end position="245"/>
    </location>
</feature>
<feature type="modified residue" description="4-aspartylphosphate" evidence="2">
    <location>
        <position position="65"/>
    </location>
</feature>
<dbReference type="EMBL" id="AF041468">
    <property type="protein sequence ID" value="AAC35613.1"/>
    <property type="molecule type" value="Genomic_DNA"/>
</dbReference>
<dbReference type="SMR" id="O78428"/>
<dbReference type="HOGENOM" id="CLU_000445_30_4_1"/>
<dbReference type="OMA" id="MDVDRHT"/>
<dbReference type="GO" id="GO:0009507">
    <property type="term" value="C:chloroplast"/>
    <property type="evidence" value="ECO:0007669"/>
    <property type="project" value="UniProtKB-SubCell"/>
</dbReference>
<dbReference type="GO" id="GO:0005829">
    <property type="term" value="C:cytosol"/>
    <property type="evidence" value="ECO:0007669"/>
    <property type="project" value="TreeGrafter"/>
</dbReference>
<dbReference type="GO" id="GO:0032993">
    <property type="term" value="C:protein-DNA complex"/>
    <property type="evidence" value="ECO:0007669"/>
    <property type="project" value="TreeGrafter"/>
</dbReference>
<dbReference type="GO" id="GO:0000156">
    <property type="term" value="F:phosphorelay response regulator activity"/>
    <property type="evidence" value="ECO:0007669"/>
    <property type="project" value="TreeGrafter"/>
</dbReference>
<dbReference type="GO" id="GO:0000976">
    <property type="term" value="F:transcription cis-regulatory region binding"/>
    <property type="evidence" value="ECO:0007669"/>
    <property type="project" value="TreeGrafter"/>
</dbReference>
<dbReference type="GO" id="GO:0006355">
    <property type="term" value="P:regulation of DNA-templated transcription"/>
    <property type="evidence" value="ECO:0007669"/>
    <property type="project" value="InterPro"/>
</dbReference>
<dbReference type="CDD" id="cd17574">
    <property type="entry name" value="REC_OmpR"/>
    <property type="match status" value="1"/>
</dbReference>
<dbReference type="CDD" id="cd00383">
    <property type="entry name" value="trans_reg_C"/>
    <property type="match status" value="1"/>
</dbReference>
<dbReference type="FunFam" id="3.40.50.2300:FF:000001">
    <property type="entry name" value="DNA-binding response regulator PhoB"/>
    <property type="match status" value="1"/>
</dbReference>
<dbReference type="Gene3D" id="3.40.50.2300">
    <property type="match status" value="1"/>
</dbReference>
<dbReference type="Gene3D" id="6.10.250.690">
    <property type="match status" value="1"/>
</dbReference>
<dbReference type="Gene3D" id="1.10.10.10">
    <property type="entry name" value="Winged helix-like DNA-binding domain superfamily/Winged helix DNA-binding domain"/>
    <property type="match status" value="1"/>
</dbReference>
<dbReference type="InterPro" id="IPR011006">
    <property type="entry name" value="CheY-like_superfamily"/>
</dbReference>
<dbReference type="InterPro" id="IPR001867">
    <property type="entry name" value="OmpR/PhoB-type_DNA-bd"/>
</dbReference>
<dbReference type="InterPro" id="IPR001789">
    <property type="entry name" value="Sig_transdc_resp-reg_receiver"/>
</dbReference>
<dbReference type="InterPro" id="IPR039420">
    <property type="entry name" value="WalR-like"/>
</dbReference>
<dbReference type="InterPro" id="IPR036388">
    <property type="entry name" value="WH-like_DNA-bd_sf"/>
</dbReference>
<dbReference type="NCBIfam" id="NF045944">
    <property type="entry name" value="ResRegRpaBCyano"/>
    <property type="match status" value="1"/>
</dbReference>
<dbReference type="PANTHER" id="PTHR48111:SF65">
    <property type="entry name" value="OMPR SUBFAMILY"/>
    <property type="match status" value="1"/>
</dbReference>
<dbReference type="PANTHER" id="PTHR48111">
    <property type="entry name" value="REGULATOR OF RPOS"/>
    <property type="match status" value="1"/>
</dbReference>
<dbReference type="Pfam" id="PF00072">
    <property type="entry name" value="Response_reg"/>
    <property type="match status" value="1"/>
</dbReference>
<dbReference type="Pfam" id="PF00486">
    <property type="entry name" value="Trans_reg_C"/>
    <property type="match status" value="1"/>
</dbReference>
<dbReference type="SMART" id="SM00448">
    <property type="entry name" value="REC"/>
    <property type="match status" value="1"/>
</dbReference>
<dbReference type="SMART" id="SM00862">
    <property type="entry name" value="Trans_reg_C"/>
    <property type="match status" value="1"/>
</dbReference>
<dbReference type="SUPFAM" id="SSF52172">
    <property type="entry name" value="CheY-like"/>
    <property type="match status" value="1"/>
</dbReference>
<dbReference type="PROSITE" id="PS51755">
    <property type="entry name" value="OMPR_PHOB"/>
    <property type="match status" value="1"/>
</dbReference>
<dbReference type="PROSITE" id="PS50110">
    <property type="entry name" value="RESPONSE_REGULATORY"/>
    <property type="match status" value="1"/>
</dbReference>
<name>YCF27_GUITH</name>
<geneLocation type="chloroplast"/>
<evidence type="ECO:0000250" key="1"/>
<evidence type="ECO:0000255" key="2">
    <source>
        <dbReference type="PROSITE-ProRule" id="PRU00169"/>
    </source>
</evidence>
<evidence type="ECO:0000255" key="3">
    <source>
        <dbReference type="PROSITE-ProRule" id="PRU01091"/>
    </source>
</evidence>